<name>PABP5_GORGO</name>
<keyword id="KW-0963">Cytoplasm</keyword>
<keyword id="KW-1185">Reference proteome</keyword>
<keyword id="KW-0677">Repeat</keyword>
<keyword id="KW-0694">RNA-binding</keyword>
<comment type="function">
    <text evidence="1">Binds the poly(A) tail of mRNA. May be involved in cytoplasmic regulatory processes of mRNA metabolism. Can probably bind to cytoplasmic RNA sequences other than poly(A) in vivo (By similarity).</text>
</comment>
<comment type="subcellular location">
    <subcellularLocation>
        <location evidence="1">Cytoplasm</location>
    </subcellularLocation>
</comment>
<evidence type="ECO:0000250" key="1"/>
<evidence type="ECO:0000255" key="2">
    <source>
        <dbReference type="PROSITE-ProRule" id="PRU00176"/>
    </source>
</evidence>
<organism>
    <name type="scientific">Gorilla gorilla gorilla</name>
    <name type="common">Western lowland gorilla</name>
    <dbReference type="NCBI Taxonomy" id="9595"/>
    <lineage>
        <taxon>Eukaryota</taxon>
        <taxon>Metazoa</taxon>
        <taxon>Chordata</taxon>
        <taxon>Craniata</taxon>
        <taxon>Vertebrata</taxon>
        <taxon>Euteleostomi</taxon>
        <taxon>Mammalia</taxon>
        <taxon>Eutheria</taxon>
        <taxon>Euarchontoglires</taxon>
        <taxon>Primates</taxon>
        <taxon>Haplorrhini</taxon>
        <taxon>Catarrhini</taxon>
        <taxon>Hominidae</taxon>
        <taxon>Gorilla</taxon>
    </lineage>
</organism>
<protein>
    <recommendedName>
        <fullName>Polyadenylate-binding protein 5</fullName>
        <shortName>PABP-5</shortName>
        <shortName>Poly(A)-binding protein 5</shortName>
    </recommendedName>
</protein>
<dbReference type="EMBL" id="AJ299078">
    <property type="protein sequence ID" value="CAC42817.1"/>
    <property type="molecule type" value="Genomic_DNA"/>
</dbReference>
<dbReference type="RefSeq" id="XP_004064521.1">
    <property type="nucleotide sequence ID" value="XM_004064473.4"/>
</dbReference>
<dbReference type="SMR" id="P60047"/>
<dbReference type="FunCoup" id="P60047">
    <property type="interactions" value="201"/>
</dbReference>
<dbReference type="STRING" id="9593.ENSGGOP00000027578"/>
<dbReference type="Ensembl" id="ENSGGOT00000007655.3">
    <property type="protein sequence ID" value="ENSGGOP00000027578.1"/>
    <property type="gene ID" value="ENSGGOG00000007622.3"/>
</dbReference>
<dbReference type="GeneID" id="101142042"/>
<dbReference type="KEGG" id="ggo:101142042"/>
<dbReference type="CTD" id="140886"/>
<dbReference type="eggNOG" id="KOG0123">
    <property type="taxonomic scope" value="Eukaryota"/>
</dbReference>
<dbReference type="GeneTree" id="ENSGT00940000162668"/>
<dbReference type="HOGENOM" id="CLU_012062_22_6_1"/>
<dbReference type="InParanoid" id="P60047"/>
<dbReference type="OMA" id="CTIFVFY"/>
<dbReference type="OrthoDB" id="5832at9604"/>
<dbReference type="Proteomes" id="UP000001519">
    <property type="component" value="Chromosome X"/>
</dbReference>
<dbReference type="Bgee" id="ENSGGOG00000007622">
    <property type="expression patterns" value="Expressed in cerebellum and 6 other cell types or tissues"/>
</dbReference>
<dbReference type="GO" id="GO:0010494">
    <property type="term" value="C:cytoplasmic stress granule"/>
    <property type="evidence" value="ECO:0000318"/>
    <property type="project" value="GO_Central"/>
</dbReference>
<dbReference type="GO" id="GO:0005829">
    <property type="term" value="C:cytosol"/>
    <property type="evidence" value="ECO:0000318"/>
    <property type="project" value="GO_Central"/>
</dbReference>
<dbReference type="GO" id="GO:0005634">
    <property type="term" value="C:nucleus"/>
    <property type="evidence" value="ECO:0000318"/>
    <property type="project" value="GO_Central"/>
</dbReference>
<dbReference type="GO" id="GO:1990904">
    <property type="term" value="C:ribonucleoprotein complex"/>
    <property type="evidence" value="ECO:0000318"/>
    <property type="project" value="GO_Central"/>
</dbReference>
<dbReference type="GO" id="GO:0003730">
    <property type="term" value="F:mRNA 3'-UTR binding"/>
    <property type="evidence" value="ECO:0000318"/>
    <property type="project" value="GO_Central"/>
</dbReference>
<dbReference type="GO" id="GO:0008143">
    <property type="term" value="F:poly(A) binding"/>
    <property type="evidence" value="ECO:0000318"/>
    <property type="project" value="GO_Central"/>
</dbReference>
<dbReference type="GO" id="GO:0008266">
    <property type="term" value="F:poly(U) RNA binding"/>
    <property type="evidence" value="ECO:0000318"/>
    <property type="project" value="GO_Central"/>
</dbReference>
<dbReference type="CDD" id="cd12378">
    <property type="entry name" value="RRM1_I_PABPs"/>
    <property type="match status" value="1"/>
</dbReference>
<dbReference type="CDD" id="cd12379">
    <property type="entry name" value="RRM2_I_PABPs"/>
    <property type="match status" value="1"/>
</dbReference>
<dbReference type="CDD" id="cd12380">
    <property type="entry name" value="RRM3_I_PABPs"/>
    <property type="match status" value="1"/>
</dbReference>
<dbReference type="FunFam" id="3.30.70.330:FF:000003">
    <property type="entry name" value="Polyadenylate-binding protein"/>
    <property type="match status" value="1"/>
</dbReference>
<dbReference type="FunFam" id="3.30.70.330:FF:000049">
    <property type="entry name" value="Polyadenylate-binding protein"/>
    <property type="match status" value="1"/>
</dbReference>
<dbReference type="FunFam" id="3.30.70.330:FF:000234">
    <property type="entry name" value="Polyadenylate-binding protein 5"/>
    <property type="match status" value="1"/>
</dbReference>
<dbReference type="FunFam" id="3.30.70.330:FF:000338">
    <property type="entry name" value="polyadenylate-binding protein 5"/>
    <property type="match status" value="1"/>
</dbReference>
<dbReference type="Gene3D" id="3.30.70.330">
    <property type="match status" value="4"/>
</dbReference>
<dbReference type="InterPro" id="IPR012677">
    <property type="entry name" value="Nucleotide-bd_a/b_plait_sf"/>
</dbReference>
<dbReference type="InterPro" id="IPR006515">
    <property type="entry name" value="PABP_1234"/>
</dbReference>
<dbReference type="InterPro" id="IPR034364">
    <property type="entry name" value="PABP_RRM1"/>
</dbReference>
<dbReference type="InterPro" id="IPR035979">
    <property type="entry name" value="RBD_domain_sf"/>
</dbReference>
<dbReference type="InterPro" id="IPR045305">
    <property type="entry name" value="RRM2_I_PABPs"/>
</dbReference>
<dbReference type="InterPro" id="IPR000504">
    <property type="entry name" value="RRM_dom"/>
</dbReference>
<dbReference type="InterPro" id="IPR003954">
    <property type="entry name" value="RRM_dom_euk"/>
</dbReference>
<dbReference type="NCBIfam" id="TIGR01628">
    <property type="entry name" value="PABP-1234"/>
    <property type="match status" value="1"/>
</dbReference>
<dbReference type="PANTHER" id="PTHR24012">
    <property type="entry name" value="RNA BINDING PROTEIN"/>
    <property type="match status" value="1"/>
</dbReference>
<dbReference type="Pfam" id="PF00076">
    <property type="entry name" value="RRM_1"/>
    <property type="match status" value="4"/>
</dbReference>
<dbReference type="SMART" id="SM00360">
    <property type="entry name" value="RRM"/>
    <property type="match status" value="4"/>
</dbReference>
<dbReference type="SMART" id="SM00361">
    <property type="entry name" value="RRM_1"/>
    <property type="match status" value="3"/>
</dbReference>
<dbReference type="SUPFAM" id="SSF54928">
    <property type="entry name" value="RNA-binding domain, RBD"/>
    <property type="match status" value="2"/>
</dbReference>
<dbReference type="PROSITE" id="PS50102">
    <property type="entry name" value="RRM"/>
    <property type="match status" value="4"/>
</dbReference>
<sequence length="382" mass="43331">MGSGEPNPAGKKKKYLKAALYVGDLDPDVTEDMLYKKFRPAGPLRFTRICRDPVTRSPLGYGYVNFRFPADAEWALNTMNFDLINGKPFRLMWSQPDDRLRKSGVGNIFIKNLDKSIDNRALFYLFSAFGNILSCKVVCDDNGSKGYAYVHFDSLAAANRAIWHMNGVRLNNRQVYVGRFKFPEERAAEVRTRDRATFTNVFVKNIGDDIDDEKLKELFCEYGPTESVKVIRDASGKSKGFGFVRYETHEAAQKAVLDLHGKSIDGKVLYVGRAQKKIERLAELRRRFERLRLKEKSRPPGVPIYIKNLDETINDEKLKEEFSSFGSISRAKVMMEVGQGKGFGVVCFSSFEEATKAVDEMNGRIVGSKPLHVTLGQARRRC</sequence>
<feature type="chain" id="PRO_0000081704" description="Polyadenylate-binding protein 5">
    <location>
        <begin position="1"/>
        <end position="382"/>
    </location>
</feature>
<feature type="domain" description="RRM 1" evidence="2">
    <location>
        <begin position="18"/>
        <end position="96"/>
    </location>
</feature>
<feature type="domain" description="RRM 2" evidence="2">
    <location>
        <begin position="106"/>
        <end position="182"/>
    </location>
</feature>
<feature type="domain" description="RRM 3" evidence="2">
    <location>
        <begin position="199"/>
        <end position="276"/>
    </location>
</feature>
<feature type="domain" description="RRM 4" evidence="2">
    <location>
        <begin position="302"/>
        <end position="378"/>
    </location>
</feature>
<gene>
    <name type="primary">PABPC5</name>
    <name type="synonym">PABP5</name>
</gene>
<accession>P60047</accession>
<accession>Q95J70</accession>
<reference key="1">
    <citation type="journal article" date="2001" name="Genomics">
        <title>A novel poly(A)-binding protein gene (PABPC5) maps to an X-specific subinterval in the Xq21.3/Yp11.2 homology block of the human sex chromosomes.</title>
        <authorList>
            <person name="Blanco P."/>
            <person name="Sargent C.A."/>
            <person name="Boucher C.A."/>
            <person name="Howell G."/>
            <person name="Ross M."/>
            <person name="Affara N.A."/>
        </authorList>
    </citation>
    <scope>NUCLEOTIDE SEQUENCE [GENOMIC DNA]</scope>
</reference>
<proteinExistence type="inferred from homology"/>